<keyword id="KW-0903">Direct protein sequencing</keyword>
<keyword id="KW-0574">Periplasm</keyword>
<keyword id="KW-1185">Reference proteome</keyword>
<keyword id="KW-0732">Signal</keyword>
<reference key="1">
    <citation type="journal article" date="1999" name="J. Bacteriol.">
        <title>The acid-inducible asr gene in Escherichia coli: transcriptional control by the phoBR operon.</title>
        <authorList>
            <person name="Suziedeliene E."/>
            <person name="Suziedelis K."/>
            <person name="Garbenciute V."/>
            <person name="Normark S."/>
        </authorList>
    </citation>
    <scope>NUCLEOTIDE SEQUENCE [GENOMIC DNA]</scope>
    <source>
        <strain>K12 / N2212</strain>
    </source>
</reference>
<reference key="2">
    <citation type="submission" date="2001-10" db="EMBL/GenBank/DDBJ databases">
        <authorList>
            <person name="Suziedeliene E."/>
        </authorList>
    </citation>
    <scope>SEQUENCE REVISION</scope>
</reference>
<reference key="3">
    <citation type="journal article" date="1996" name="DNA Res.">
        <title>A 570-kb DNA sequence of the Escherichia coli K-12 genome corresponding to the 28.0-40.1 min region on the linkage map.</title>
        <authorList>
            <person name="Aiba H."/>
            <person name="Baba T."/>
            <person name="Fujita K."/>
            <person name="Hayashi K."/>
            <person name="Inada T."/>
            <person name="Isono K."/>
            <person name="Itoh T."/>
            <person name="Kasai H."/>
            <person name="Kashimoto K."/>
            <person name="Kimura S."/>
            <person name="Kitakawa M."/>
            <person name="Kitagawa M."/>
            <person name="Makino K."/>
            <person name="Miki T."/>
            <person name="Mizobuchi K."/>
            <person name="Mori H."/>
            <person name="Mori T."/>
            <person name="Motomura K."/>
            <person name="Nakade S."/>
            <person name="Nakamura Y."/>
            <person name="Nashimoto H."/>
            <person name="Nishio Y."/>
            <person name="Oshima T."/>
            <person name="Saito N."/>
            <person name="Sampei G."/>
            <person name="Seki Y."/>
            <person name="Sivasundaram S."/>
            <person name="Tagami H."/>
            <person name="Takeda J."/>
            <person name="Takemoto K."/>
            <person name="Takeuchi Y."/>
            <person name="Wada C."/>
            <person name="Yamamoto Y."/>
            <person name="Horiuchi T."/>
        </authorList>
    </citation>
    <scope>NUCLEOTIDE SEQUENCE [LARGE SCALE GENOMIC DNA]</scope>
    <source>
        <strain>K12 / W3110 / ATCC 27325 / DSM 5911</strain>
    </source>
</reference>
<reference key="4">
    <citation type="journal article" date="1997" name="Science">
        <title>The complete genome sequence of Escherichia coli K-12.</title>
        <authorList>
            <person name="Blattner F.R."/>
            <person name="Plunkett G. III"/>
            <person name="Bloch C.A."/>
            <person name="Perna N.T."/>
            <person name="Burland V."/>
            <person name="Riley M."/>
            <person name="Collado-Vides J."/>
            <person name="Glasner J.D."/>
            <person name="Rode C.K."/>
            <person name="Mayhew G.F."/>
            <person name="Gregor J."/>
            <person name="Davis N.W."/>
            <person name="Kirkpatrick H.A."/>
            <person name="Goeden M.A."/>
            <person name="Rose D.J."/>
            <person name="Mau B."/>
            <person name="Shao Y."/>
        </authorList>
    </citation>
    <scope>NUCLEOTIDE SEQUENCE [LARGE SCALE GENOMIC DNA]</scope>
    <source>
        <strain>K12 / MG1655 / ATCC 47076</strain>
    </source>
</reference>
<reference key="5">
    <citation type="journal article" date="2006" name="Mol. Syst. Biol.">
        <title>Highly accurate genome sequences of Escherichia coli K-12 strains MG1655 and W3110.</title>
        <authorList>
            <person name="Hayashi K."/>
            <person name="Morooka N."/>
            <person name="Yamamoto Y."/>
            <person name="Fujita K."/>
            <person name="Isono K."/>
            <person name="Choi S."/>
            <person name="Ohtsubo E."/>
            <person name="Baba T."/>
            <person name="Wanner B.L."/>
            <person name="Mori H."/>
            <person name="Horiuchi T."/>
        </authorList>
    </citation>
    <scope>NUCLEOTIDE SEQUENCE [LARGE SCALE GENOMIC DNA]</scope>
    <source>
        <strain>K12 / W3110 / ATCC 27325 / DSM 5911</strain>
    </source>
</reference>
<reference key="6">
    <citation type="journal article" date="2003" name="J. Bacteriol.">
        <title>Molecular characterization of the acid-inducible asr gene of Escherichia coli and its role in acid stress response.</title>
        <authorList>
            <person name="Seputiene V."/>
            <person name="Motiejunas D."/>
            <person name="Suziedelis K."/>
            <person name="Tomenius H."/>
            <person name="Normark S."/>
            <person name="Melefors O."/>
            <person name="Suziedeliene E."/>
        </authorList>
    </citation>
    <scope>PROTEIN SEQUENCE OF 22-31 AND 59-68</scope>
    <scope>PROTEOLYTIC PROCESSING</scope>
    <scope>FUNCTION</scope>
    <scope>IDENTIFICATION OF START CODON</scope>
</reference>
<protein>
    <recommendedName>
        <fullName>Acid shock protein</fullName>
    </recommendedName>
</protein>
<name>ASR_ECOLI</name>
<gene>
    <name type="primary">asr</name>
    <name type="ordered locus">b1597</name>
    <name type="ordered locus">JW5826</name>
</gene>
<organism>
    <name type="scientific">Escherichia coli (strain K12)</name>
    <dbReference type="NCBI Taxonomy" id="83333"/>
    <lineage>
        <taxon>Bacteria</taxon>
        <taxon>Pseudomonadati</taxon>
        <taxon>Pseudomonadota</taxon>
        <taxon>Gammaproteobacteria</taxon>
        <taxon>Enterobacterales</taxon>
        <taxon>Enterobacteriaceae</taxon>
        <taxon>Escherichia</taxon>
    </lineage>
</organism>
<proteinExistence type="evidence at protein level"/>
<dbReference type="EMBL" id="AF405541">
    <property type="protein sequence ID" value="AAA23500.2"/>
    <property type="molecule type" value="Genomic_DNA"/>
</dbReference>
<dbReference type="EMBL" id="U00096">
    <property type="protein sequence ID" value="AAC74669.2"/>
    <property type="molecule type" value="Genomic_DNA"/>
</dbReference>
<dbReference type="EMBL" id="AP009048">
    <property type="protein sequence ID" value="BAA15331.2"/>
    <property type="molecule type" value="Genomic_DNA"/>
</dbReference>
<dbReference type="PIR" id="G64915">
    <property type="entry name" value="G64915"/>
</dbReference>
<dbReference type="RefSeq" id="NP_416114.2">
    <property type="nucleotide sequence ID" value="NC_000913.3"/>
</dbReference>
<dbReference type="RefSeq" id="WP_001340364.1">
    <property type="nucleotide sequence ID" value="NZ_SSZK01000001.1"/>
</dbReference>
<dbReference type="BioGRID" id="4259122">
    <property type="interactions" value="21"/>
</dbReference>
<dbReference type="BioGRID" id="849492">
    <property type="interactions" value="3"/>
</dbReference>
<dbReference type="DIP" id="DIP-9183N"/>
<dbReference type="FunCoup" id="P36560">
    <property type="interactions" value="29"/>
</dbReference>
<dbReference type="IntAct" id="P36560">
    <property type="interactions" value="5"/>
</dbReference>
<dbReference type="STRING" id="511145.b1597"/>
<dbReference type="PaxDb" id="511145-b1597"/>
<dbReference type="EnsemblBacteria" id="AAC74669">
    <property type="protein sequence ID" value="AAC74669"/>
    <property type="gene ID" value="b1597"/>
</dbReference>
<dbReference type="GeneID" id="945103"/>
<dbReference type="KEGG" id="ecj:JW5826"/>
<dbReference type="KEGG" id="eco:b1597"/>
<dbReference type="PATRIC" id="fig|511145.12.peg.1668"/>
<dbReference type="EchoBASE" id="EB2069"/>
<dbReference type="eggNOG" id="ENOG5032U9T">
    <property type="taxonomic scope" value="Bacteria"/>
</dbReference>
<dbReference type="HOGENOM" id="CLU_102486_2_0_6"/>
<dbReference type="InParanoid" id="P36560"/>
<dbReference type="OMA" id="HVKKHHA"/>
<dbReference type="BioCyc" id="EcoCyc:G6855-MONOMER"/>
<dbReference type="PRO" id="PR:P36560"/>
<dbReference type="Proteomes" id="UP000000625">
    <property type="component" value="Chromosome"/>
</dbReference>
<dbReference type="GO" id="GO:0030288">
    <property type="term" value="C:outer membrane-bounded periplasmic space"/>
    <property type="evidence" value="ECO:0000314"/>
    <property type="project" value="EcoCyc"/>
</dbReference>
<dbReference type="GO" id="GO:0010447">
    <property type="term" value="P:response to acidic pH"/>
    <property type="evidence" value="ECO:0000315"/>
    <property type="project" value="EcoCyc"/>
</dbReference>
<dbReference type="HAMAP" id="MF_00546">
    <property type="entry name" value="Asr"/>
    <property type="match status" value="1"/>
</dbReference>
<dbReference type="InterPro" id="IPR023497">
    <property type="entry name" value="Acid_shock"/>
</dbReference>
<dbReference type="NCBIfam" id="NF033636">
    <property type="entry name" value="acid_shock_Asr"/>
    <property type="match status" value="1"/>
</dbReference>
<dbReference type="Pfam" id="PF06392">
    <property type="entry name" value="Asr"/>
    <property type="match status" value="1"/>
</dbReference>
<feature type="signal peptide" evidence="2">
    <location>
        <begin position="1"/>
        <end position="21"/>
    </location>
</feature>
<feature type="propeptide" id="PRO_0000269503" evidence="2">
    <location>
        <begin position="22"/>
        <end position="58"/>
    </location>
</feature>
<feature type="chain" id="PRO_0000002402" description="Acid shock protein">
    <location>
        <begin position="59"/>
        <end position="102"/>
    </location>
</feature>
<feature type="region of interest" description="Disordered" evidence="1">
    <location>
        <begin position="21"/>
        <end position="102"/>
    </location>
</feature>
<feature type="compositionally biased region" description="Low complexity" evidence="1">
    <location>
        <begin position="21"/>
        <end position="41"/>
    </location>
</feature>
<feature type="compositionally biased region" description="Basic residues" evidence="1">
    <location>
        <begin position="80"/>
        <end position="90"/>
    </location>
</feature>
<feature type="compositionally biased region" description="Low complexity" evidence="1">
    <location>
        <begin position="91"/>
        <end position="102"/>
    </location>
</feature>
<comment type="function">
    <text evidence="2">Required for growth and/or survival at acidic conditions (pH 4.5). Needed for the adaptation process at pH 4.5 that enables cells to survive at extremely low pH (pH 2.0).</text>
</comment>
<comment type="subcellular location">
    <subcellularLocation>
        <location>Periplasm</location>
    </subcellularLocation>
</comment>
<comment type="induction">
    <text>By high environmental acidity.</text>
</comment>
<comment type="PTM">
    <text evidence="2">Proteolytic processing gives rise to the active protein.</text>
</comment>
<comment type="similarity">
    <text evidence="3">Belongs to the Asr family.</text>
</comment>
<accession>P36560</accession>
<accession>P77267</accession>
<evidence type="ECO:0000256" key="1">
    <source>
        <dbReference type="SAM" id="MobiDB-lite"/>
    </source>
</evidence>
<evidence type="ECO:0000269" key="2">
    <source>
    </source>
</evidence>
<evidence type="ECO:0000305" key="3"/>
<sequence length="102" mass="10591">MKKVLALVVAAAMGLSSAAFAAETTTTPAPTATTTKAAPAKTTHHKKQHKAAPAQKAQAAKKHHKNTKAEQKAPEQKAQAAKKHAKKHSHQQPAKPAAQPAA</sequence>